<gene>
    <name type="primary">DERA</name>
</gene>
<reference key="1">
    <citation type="submission" date="2005-08" db="EMBL/GenBank/DDBJ databases">
        <authorList>
            <consortium name="NIH - Mammalian Gene Collection (MGC) project"/>
        </authorList>
    </citation>
    <scope>NUCLEOTIDE SEQUENCE [LARGE SCALE MRNA]</scope>
    <source>
        <strain>Crossbred X Angus</strain>
        <tissue>Ileum</tissue>
    </source>
</reference>
<organism>
    <name type="scientific">Bos taurus</name>
    <name type="common">Bovine</name>
    <dbReference type="NCBI Taxonomy" id="9913"/>
    <lineage>
        <taxon>Eukaryota</taxon>
        <taxon>Metazoa</taxon>
        <taxon>Chordata</taxon>
        <taxon>Craniata</taxon>
        <taxon>Vertebrata</taxon>
        <taxon>Euteleostomi</taxon>
        <taxon>Mammalia</taxon>
        <taxon>Eutheria</taxon>
        <taxon>Laurasiatheria</taxon>
        <taxon>Artiodactyla</taxon>
        <taxon>Ruminantia</taxon>
        <taxon>Pecora</taxon>
        <taxon>Bovidae</taxon>
        <taxon>Bovinae</taxon>
        <taxon>Bos</taxon>
    </lineage>
</organism>
<name>DEOC_BOVIN</name>
<dbReference type="EC" id="4.1.2.4" evidence="2"/>
<dbReference type="EMBL" id="BC102242">
    <property type="protein sequence ID" value="AAI02243.1"/>
    <property type="molecule type" value="mRNA"/>
</dbReference>
<dbReference type="RefSeq" id="NP_001069496.1">
    <property type="nucleotide sequence ID" value="NM_001076028.2"/>
</dbReference>
<dbReference type="SMR" id="Q3T0V9"/>
<dbReference type="FunCoup" id="Q3T0V9">
    <property type="interactions" value="1448"/>
</dbReference>
<dbReference type="STRING" id="9913.ENSBTAP00000007367"/>
<dbReference type="PaxDb" id="9913-ENSBTAP00000007367"/>
<dbReference type="PeptideAtlas" id="Q3T0V9"/>
<dbReference type="Ensembl" id="ENSBTAT00000007367.4">
    <property type="protein sequence ID" value="ENSBTAP00000007367.3"/>
    <property type="gene ID" value="ENSBTAG00000022167.5"/>
</dbReference>
<dbReference type="GeneID" id="534558"/>
<dbReference type="KEGG" id="bta:534558"/>
<dbReference type="CTD" id="51071"/>
<dbReference type="VEuPathDB" id="HostDB:ENSBTAG00000022167"/>
<dbReference type="VGNC" id="VGNC:28009">
    <property type="gene designation" value="DERA"/>
</dbReference>
<dbReference type="eggNOG" id="KOG3981">
    <property type="taxonomic scope" value="Eukaryota"/>
</dbReference>
<dbReference type="GeneTree" id="ENSGT00390000007878"/>
<dbReference type="HOGENOM" id="CLU_053595_3_0_1"/>
<dbReference type="InParanoid" id="Q3T0V9"/>
<dbReference type="OMA" id="RYSGPDY"/>
<dbReference type="OrthoDB" id="70823at2759"/>
<dbReference type="TreeFam" id="TF314251"/>
<dbReference type="Reactome" id="R-BTA-6798695">
    <property type="pathway name" value="Neutrophil degranulation"/>
</dbReference>
<dbReference type="Reactome" id="R-BTA-71336">
    <property type="pathway name" value="Pentose phosphate pathway"/>
</dbReference>
<dbReference type="UniPathway" id="UPA00002">
    <property type="reaction ID" value="UER00468"/>
</dbReference>
<dbReference type="Proteomes" id="UP000009136">
    <property type="component" value="Chromosome 5"/>
</dbReference>
<dbReference type="Bgee" id="ENSBTAG00000022167">
    <property type="expression patterns" value="Expressed in liver and 106 other cell types or tissues"/>
</dbReference>
<dbReference type="GO" id="GO:0005737">
    <property type="term" value="C:cytoplasm"/>
    <property type="evidence" value="ECO:0007669"/>
    <property type="project" value="UniProtKB-SubCell"/>
</dbReference>
<dbReference type="GO" id="GO:0005654">
    <property type="term" value="C:nucleoplasm"/>
    <property type="evidence" value="ECO:0007669"/>
    <property type="project" value="Ensembl"/>
</dbReference>
<dbReference type="GO" id="GO:0004139">
    <property type="term" value="F:deoxyribose-phosphate aldolase activity"/>
    <property type="evidence" value="ECO:0000318"/>
    <property type="project" value="GO_Central"/>
</dbReference>
<dbReference type="GO" id="GO:0016052">
    <property type="term" value="P:carbohydrate catabolic process"/>
    <property type="evidence" value="ECO:0000318"/>
    <property type="project" value="GO_Central"/>
</dbReference>
<dbReference type="GO" id="GO:0046121">
    <property type="term" value="P:deoxyribonucleoside catabolic process"/>
    <property type="evidence" value="ECO:0007669"/>
    <property type="project" value="Ensembl"/>
</dbReference>
<dbReference type="GO" id="GO:0009264">
    <property type="term" value="P:deoxyribonucleotide catabolic process"/>
    <property type="evidence" value="ECO:0000318"/>
    <property type="project" value="GO_Central"/>
</dbReference>
<dbReference type="GO" id="GO:0046386">
    <property type="term" value="P:deoxyribose phosphate catabolic process"/>
    <property type="evidence" value="ECO:0007669"/>
    <property type="project" value="UniProtKB-UniPathway"/>
</dbReference>
<dbReference type="CDD" id="cd00959">
    <property type="entry name" value="DeoC"/>
    <property type="match status" value="1"/>
</dbReference>
<dbReference type="FunFam" id="3.20.20.70:FF:000103">
    <property type="entry name" value="Putative deoxyribose-phosphate aldolase"/>
    <property type="match status" value="1"/>
</dbReference>
<dbReference type="Gene3D" id="3.20.20.70">
    <property type="entry name" value="Aldolase class I"/>
    <property type="match status" value="1"/>
</dbReference>
<dbReference type="InterPro" id="IPR013785">
    <property type="entry name" value="Aldolase_TIM"/>
</dbReference>
<dbReference type="InterPro" id="IPR011343">
    <property type="entry name" value="DeoC"/>
</dbReference>
<dbReference type="InterPro" id="IPR002915">
    <property type="entry name" value="DeoC/FbaB/LacD_aldolase"/>
</dbReference>
<dbReference type="NCBIfam" id="TIGR00126">
    <property type="entry name" value="deoC"/>
    <property type="match status" value="1"/>
</dbReference>
<dbReference type="PANTHER" id="PTHR10889">
    <property type="entry name" value="DEOXYRIBOSE-PHOSPHATE ALDOLASE"/>
    <property type="match status" value="1"/>
</dbReference>
<dbReference type="PANTHER" id="PTHR10889:SF3">
    <property type="entry name" value="DEOXYRIBOSE-PHOSPHATE ALDOLASE"/>
    <property type="match status" value="1"/>
</dbReference>
<dbReference type="Pfam" id="PF01791">
    <property type="entry name" value="DeoC"/>
    <property type="match status" value="1"/>
</dbReference>
<dbReference type="PIRSF" id="PIRSF001357">
    <property type="entry name" value="DeoC"/>
    <property type="match status" value="1"/>
</dbReference>
<dbReference type="SMART" id="SM01133">
    <property type="entry name" value="DeoC"/>
    <property type="match status" value="1"/>
</dbReference>
<dbReference type="SUPFAM" id="SSF51569">
    <property type="entry name" value="Aldolase"/>
    <property type="match status" value="1"/>
</dbReference>
<accession>Q3T0V9</accession>
<protein>
    <recommendedName>
        <fullName>Deoxyribose-phosphate aldolase</fullName>
        <shortName>DERA</shortName>
        <ecNumber evidence="2">4.1.2.4</ecNumber>
    </recommendedName>
    <alternativeName>
        <fullName>2-deoxy-D-ribose 5-phosphate aldolase</fullName>
    </alternativeName>
    <alternativeName>
        <fullName>Phosphodeoxyriboaldolase</fullName>
        <shortName>Deoxyriboaldolase</shortName>
    </alternativeName>
</protein>
<evidence type="ECO:0000250" key="1">
    <source>
        <dbReference type="UniProtKB" id="P0A6L0"/>
    </source>
</evidence>
<evidence type="ECO:0000250" key="2">
    <source>
        <dbReference type="UniProtKB" id="Q9Y315"/>
    </source>
</evidence>
<evidence type="ECO:0000305" key="3"/>
<feature type="chain" id="PRO_0000283798" description="Deoxyribose-phosphate aldolase">
    <location>
        <begin position="1"/>
        <end position="318"/>
    </location>
</feature>
<feature type="active site" description="Proton donor/acceptor" evidence="1">
    <location>
        <position position="155"/>
    </location>
</feature>
<feature type="active site" description="Schiff-base intermediate with acetaldehyde" evidence="2">
    <location>
        <position position="218"/>
    </location>
</feature>
<feature type="active site" description="Proton donor/acceptor" evidence="2">
    <location>
        <position position="254"/>
    </location>
</feature>
<keyword id="KW-0963">Cytoplasm</keyword>
<keyword id="KW-0456">Lyase</keyword>
<keyword id="KW-0539">Nucleus</keyword>
<keyword id="KW-1185">Reference proteome</keyword>
<keyword id="KW-0704">Schiff base</keyword>
<comment type="function">
    <text evidence="2">Catalyzes a reversible aldol reaction between acetaldehyde and D-glyceraldehyde 3-phosphate to generate 2-deoxy-D-ribose 5-phosphate. Participates in stress granule (SG) assembly. May allow ATP production from extracellular deoxyinosine in conditions of energy deprivation.</text>
</comment>
<comment type="catalytic activity">
    <reaction evidence="2">
        <text>2-deoxy-D-ribose 5-phosphate = D-glyceraldehyde 3-phosphate + acetaldehyde</text>
        <dbReference type="Rhea" id="RHEA:12821"/>
        <dbReference type="ChEBI" id="CHEBI:15343"/>
        <dbReference type="ChEBI" id="CHEBI:59776"/>
        <dbReference type="ChEBI" id="CHEBI:62877"/>
        <dbReference type="EC" id="4.1.2.4"/>
    </reaction>
</comment>
<comment type="pathway">
    <text>Carbohydrate degradation; 2-deoxy-D-ribose 1-phosphate degradation; D-glyceraldehyde 3-phosphate and acetaldehyde from 2-deoxy-alpha-D-ribose 1-phosphate: step 2/2.</text>
</comment>
<comment type="subunit">
    <text evidence="2">Interacts with YBX1.</text>
</comment>
<comment type="subcellular location">
    <subcellularLocation>
        <location evidence="2">Cytoplasm</location>
    </subcellularLocation>
    <subcellularLocation>
        <location evidence="2">Cytoplasmic granule</location>
    </subcellularLocation>
    <subcellularLocation>
        <location evidence="2">Nucleus</location>
    </subcellularLocation>
    <text evidence="2">Recruited to stress granules but not to processing bodies upon arsenite or clotrimazole treatment or energy deprivation.</text>
</comment>
<comment type="similarity">
    <text evidence="3">Belongs to the DeoC/FbaB aldolase family. DeoC type 2 subfamily.</text>
</comment>
<sequence>MSAHQQGTELDLSWISKIQVNKPAVLRRAEQIQARRPVKKEWQAAWLLKAVTCIDLTTLSGDDTASNIQRLCYKAKYPIREDLLKALNMHDKGITTAAVCVYPARVCDAVRALKAAGCDIPVASVATGFPAAQTHLKTRLEEIRLAVEDGATEIDVVINRTLVLTGQWKALYDEIRQFRKACGEAHLKTILATGELGSLTNVYKASMIAMMAGSDFIKTSTGKETVNATFPVAIVMLRAIRDFFWKTGNKVGFKPAGGIRSAKDSLVWLSLIKEELGDEWMKPELFRIGASTLLADIERQIYHHVTGRYAAYHDLPMS</sequence>
<proteinExistence type="evidence at transcript level"/>